<gene>
    <name evidence="4" type="primary">HHL1</name>
    <name evidence="6" type="ordered locus">At1g67700</name>
    <name evidence="8" type="ORF">F12A21.30</name>
</gene>
<reference key="1">
    <citation type="journal article" date="2000" name="Nature">
        <title>Sequence and analysis of chromosome 1 of the plant Arabidopsis thaliana.</title>
        <authorList>
            <person name="Theologis A."/>
            <person name="Ecker J.R."/>
            <person name="Palm C.J."/>
            <person name="Federspiel N.A."/>
            <person name="Kaul S."/>
            <person name="White O."/>
            <person name="Alonso J."/>
            <person name="Altafi H."/>
            <person name="Araujo R."/>
            <person name="Bowman C.L."/>
            <person name="Brooks S.Y."/>
            <person name="Buehler E."/>
            <person name="Chan A."/>
            <person name="Chao Q."/>
            <person name="Chen H."/>
            <person name="Cheuk R.F."/>
            <person name="Chin C.W."/>
            <person name="Chung M.K."/>
            <person name="Conn L."/>
            <person name="Conway A.B."/>
            <person name="Conway A.R."/>
            <person name="Creasy T.H."/>
            <person name="Dewar K."/>
            <person name="Dunn P."/>
            <person name="Etgu P."/>
            <person name="Feldblyum T.V."/>
            <person name="Feng J.-D."/>
            <person name="Fong B."/>
            <person name="Fujii C.Y."/>
            <person name="Gill J.E."/>
            <person name="Goldsmith A.D."/>
            <person name="Haas B."/>
            <person name="Hansen N.F."/>
            <person name="Hughes B."/>
            <person name="Huizar L."/>
            <person name="Hunter J.L."/>
            <person name="Jenkins J."/>
            <person name="Johnson-Hopson C."/>
            <person name="Khan S."/>
            <person name="Khaykin E."/>
            <person name="Kim C.J."/>
            <person name="Koo H.L."/>
            <person name="Kremenetskaia I."/>
            <person name="Kurtz D.B."/>
            <person name="Kwan A."/>
            <person name="Lam B."/>
            <person name="Langin-Hooper S."/>
            <person name="Lee A."/>
            <person name="Lee J.M."/>
            <person name="Lenz C.A."/>
            <person name="Li J.H."/>
            <person name="Li Y.-P."/>
            <person name="Lin X."/>
            <person name="Liu S.X."/>
            <person name="Liu Z.A."/>
            <person name="Luros J.S."/>
            <person name="Maiti R."/>
            <person name="Marziali A."/>
            <person name="Militscher J."/>
            <person name="Miranda M."/>
            <person name="Nguyen M."/>
            <person name="Nierman W.C."/>
            <person name="Osborne B.I."/>
            <person name="Pai G."/>
            <person name="Peterson J."/>
            <person name="Pham P.K."/>
            <person name="Rizzo M."/>
            <person name="Rooney T."/>
            <person name="Rowley D."/>
            <person name="Sakano H."/>
            <person name="Salzberg S.L."/>
            <person name="Schwartz J.R."/>
            <person name="Shinn P."/>
            <person name="Southwick A.M."/>
            <person name="Sun H."/>
            <person name="Tallon L.J."/>
            <person name="Tambunga G."/>
            <person name="Toriumi M.J."/>
            <person name="Town C.D."/>
            <person name="Utterback T."/>
            <person name="Van Aken S."/>
            <person name="Vaysberg M."/>
            <person name="Vysotskaia V.S."/>
            <person name="Walker M."/>
            <person name="Wu D."/>
            <person name="Yu G."/>
            <person name="Fraser C.M."/>
            <person name="Venter J.C."/>
            <person name="Davis R.W."/>
        </authorList>
    </citation>
    <scope>NUCLEOTIDE SEQUENCE [LARGE SCALE GENOMIC DNA]</scope>
    <source>
        <strain>cv. Columbia</strain>
    </source>
</reference>
<reference key="2">
    <citation type="journal article" date="2017" name="Plant J.">
        <title>Araport11: a complete reannotation of the Arabidopsis thaliana reference genome.</title>
        <authorList>
            <person name="Cheng C.Y."/>
            <person name="Krishnakumar V."/>
            <person name="Chan A.P."/>
            <person name="Thibaud-Nissen F."/>
            <person name="Schobel S."/>
            <person name="Town C.D."/>
        </authorList>
    </citation>
    <scope>GENOME REANNOTATION</scope>
    <source>
        <strain>cv. Columbia</strain>
    </source>
</reference>
<reference key="3">
    <citation type="journal article" date="2003" name="Science">
        <title>Empirical analysis of transcriptional activity in the Arabidopsis genome.</title>
        <authorList>
            <person name="Yamada K."/>
            <person name="Lim J."/>
            <person name="Dale J.M."/>
            <person name="Chen H."/>
            <person name="Shinn P."/>
            <person name="Palm C.J."/>
            <person name="Southwick A.M."/>
            <person name="Wu H.C."/>
            <person name="Kim C.J."/>
            <person name="Nguyen M."/>
            <person name="Pham P.K."/>
            <person name="Cheuk R.F."/>
            <person name="Karlin-Newmann G."/>
            <person name="Liu S.X."/>
            <person name="Lam B."/>
            <person name="Sakano H."/>
            <person name="Wu T."/>
            <person name="Yu G."/>
            <person name="Miranda M."/>
            <person name="Quach H.L."/>
            <person name="Tripp M."/>
            <person name="Chang C.H."/>
            <person name="Lee J.M."/>
            <person name="Toriumi M.J."/>
            <person name="Chan M.M."/>
            <person name="Tang C.C."/>
            <person name="Onodera C.S."/>
            <person name="Deng J.M."/>
            <person name="Akiyama K."/>
            <person name="Ansari Y."/>
            <person name="Arakawa T."/>
            <person name="Banh J."/>
            <person name="Banno F."/>
            <person name="Bowser L."/>
            <person name="Brooks S.Y."/>
            <person name="Carninci P."/>
            <person name="Chao Q."/>
            <person name="Choy N."/>
            <person name="Enju A."/>
            <person name="Goldsmith A.D."/>
            <person name="Gurjal M."/>
            <person name="Hansen N.F."/>
            <person name="Hayashizaki Y."/>
            <person name="Johnson-Hopson C."/>
            <person name="Hsuan V.W."/>
            <person name="Iida K."/>
            <person name="Karnes M."/>
            <person name="Khan S."/>
            <person name="Koesema E."/>
            <person name="Ishida J."/>
            <person name="Jiang P.X."/>
            <person name="Jones T."/>
            <person name="Kawai J."/>
            <person name="Kamiya A."/>
            <person name="Meyers C."/>
            <person name="Nakajima M."/>
            <person name="Narusaka M."/>
            <person name="Seki M."/>
            <person name="Sakurai T."/>
            <person name="Satou M."/>
            <person name="Tamse R."/>
            <person name="Vaysberg M."/>
            <person name="Wallender E.K."/>
            <person name="Wong C."/>
            <person name="Yamamura Y."/>
            <person name="Yuan S."/>
            <person name="Shinozaki K."/>
            <person name="Davis R.W."/>
            <person name="Theologis A."/>
            <person name="Ecker J.R."/>
        </authorList>
    </citation>
    <scope>NUCLEOTIDE SEQUENCE [LARGE SCALE MRNA] (ISOFORM 2)</scope>
    <source>
        <strain>cv. Columbia</strain>
    </source>
</reference>
<reference key="4">
    <citation type="journal article" date="2009" name="DNA Res.">
        <title>Analysis of multiple occurrences of alternative splicing events in Arabidopsis thaliana using novel sequenced full-length cDNAs.</title>
        <authorList>
            <person name="Iida K."/>
            <person name="Fukami-Kobayashi K."/>
            <person name="Toyoda A."/>
            <person name="Sakaki Y."/>
            <person name="Kobayashi M."/>
            <person name="Seki M."/>
            <person name="Shinozaki K."/>
        </authorList>
    </citation>
    <scope>NUCLEOTIDE SEQUENCE [LARGE SCALE MRNA] (ISOFORM 1)</scope>
    <source>
        <strain>cv. Columbia</strain>
    </source>
</reference>
<reference key="5">
    <citation type="submission" date="2002-03" db="EMBL/GenBank/DDBJ databases">
        <title>Full-length cDNA from Arabidopsis thaliana.</title>
        <authorList>
            <person name="Brover V.V."/>
            <person name="Troukhan M.E."/>
            <person name="Alexandrov N.A."/>
            <person name="Lu Y.-P."/>
            <person name="Flavell R.B."/>
            <person name="Feldmann K.A."/>
        </authorList>
    </citation>
    <scope>NUCLEOTIDE SEQUENCE [LARGE SCALE MRNA] (ISOFORM 1)</scope>
</reference>
<reference key="6">
    <citation type="journal article" date="2014" name="Plant Cell">
        <title>HYPERSENSITIVE TO HIGH LIGHT1 interacts with LOW QUANTUM YIELD OF PHOTOSYSTEM II1 and functions in protection of photosystem II from photodamage in Arabidopsis.</title>
        <authorList>
            <person name="Jin H."/>
            <person name="Liu B."/>
            <person name="Luo L."/>
            <person name="Feng D."/>
            <person name="Wang P."/>
            <person name="Liu J."/>
            <person name="Da Q."/>
            <person name="He Y."/>
            <person name="Qi K."/>
            <person name="Wang J."/>
            <person name="Wang H.B."/>
        </authorList>
    </citation>
    <scope>FUNCTION</scope>
    <scope>DISRUPTION PHENOTYPE</scope>
    <scope>INTERACTION WITH LQY1; PSBB AND PSBC</scope>
    <scope>INDUCTION</scope>
</reference>
<dbReference type="EMBL" id="AC008113">
    <property type="status" value="NOT_ANNOTATED_CDS"/>
    <property type="molecule type" value="Genomic_DNA"/>
</dbReference>
<dbReference type="EMBL" id="CP002684">
    <property type="protein sequence ID" value="AEE34683.1"/>
    <property type="molecule type" value="Genomic_DNA"/>
</dbReference>
<dbReference type="EMBL" id="CP002684">
    <property type="protein sequence ID" value="AEE34684.1"/>
    <property type="molecule type" value="Genomic_DNA"/>
</dbReference>
<dbReference type="EMBL" id="CP002684">
    <property type="protein sequence ID" value="AEE34685.1"/>
    <property type="molecule type" value="Genomic_DNA"/>
</dbReference>
<dbReference type="EMBL" id="CP002684">
    <property type="protein sequence ID" value="ANM59871.1"/>
    <property type="molecule type" value="Genomic_DNA"/>
</dbReference>
<dbReference type="EMBL" id="CP002684">
    <property type="protein sequence ID" value="ANM59872.1"/>
    <property type="molecule type" value="Genomic_DNA"/>
</dbReference>
<dbReference type="EMBL" id="AK316962">
    <property type="protein sequence ID" value="BAH19661.1"/>
    <property type="molecule type" value="mRNA"/>
</dbReference>
<dbReference type="EMBL" id="AY050331">
    <property type="protein sequence ID" value="AAK91348.1"/>
    <property type="molecule type" value="mRNA"/>
</dbReference>
<dbReference type="EMBL" id="AY116936">
    <property type="protein sequence ID" value="AAM51570.1"/>
    <property type="molecule type" value="mRNA"/>
</dbReference>
<dbReference type="EMBL" id="AY085943">
    <property type="protein sequence ID" value="AAM63154.1"/>
    <property type="molecule type" value="mRNA"/>
</dbReference>
<dbReference type="RefSeq" id="NP_001185346.1">
    <molecule id="Q8LDL0-3"/>
    <property type="nucleotide sequence ID" value="NM_001198417.1"/>
</dbReference>
<dbReference type="RefSeq" id="NP_001319335.1">
    <molecule id="Q8LDL0-2"/>
    <property type="nucleotide sequence ID" value="NM_001334319.1"/>
</dbReference>
<dbReference type="RefSeq" id="NP_001319336.1">
    <molecule id="Q8LDL0-1"/>
    <property type="nucleotide sequence ID" value="NM_001334320.1"/>
</dbReference>
<dbReference type="RefSeq" id="NP_564903.3">
    <molecule id="Q8LDL0-1"/>
    <property type="nucleotide sequence ID" value="NM_105438.6"/>
</dbReference>
<dbReference type="RefSeq" id="NP_850972.1">
    <molecule id="Q8LDL0-2"/>
    <property type="nucleotide sequence ID" value="NM_180641.4"/>
</dbReference>
<dbReference type="FunCoup" id="Q8LDL0">
    <property type="interactions" value="1779"/>
</dbReference>
<dbReference type="STRING" id="3702.Q8LDL0"/>
<dbReference type="iPTMnet" id="Q8LDL0"/>
<dbReference type="PaxDb" id="3702-AT1G67700.2"/>
<dbReference type="ProteomicsDB" id="230221">
    <molecule id="Q8LDL0-1"/>
</dbReference>
<dbReference type="EnsemblPlants" id="AT1G67700.1">
    <molecule id="Q8LDL0-2"/>
    <property type="protein sequence ID" value="AT1G67700.1"/>
    <property type="gene ID" value="AT1G67700"/>
</dbReference>
<dbReference type="EnsemblPlants" id="AT1G67700.2">
    <molecule id="Q8LDL0-1"/>
    <property type="protein sequence ID" value="AT1G67700.2"/>
    <property type="gene ID" value="AT1G67700"/>
</dbReference>
<dbReference type="EnsemblPlants" id="AT1G67700.3">
    <molecule id="Q8LDL0-3"/>
    <property type="protein sequence ID" value="AT1G67700.3"/>
    <property type="gene ID" value="AT1G67700"/>
</dbReference>
<dbReference type="EnsemblPlants" id="AT1G67700.4">
    <molecule id="Q8LDL0-2"/>
    <property type="protein sequence ID" value="AT1G67700.4"/>
    <property type="gene ID" value="AT1G67700"/>
</dbReference>
<dbReference type="EnsemblPlants" id="AT1G67700.5">
    <molecule id="Q8LDL0-1"/>
    <property type="protein sequence ID" value="AT1G67700.5"/>
    <property type="gene ID" value="AT1G67700"/>
</dbReference>
<dbReference type="GeneID" id="843095"/>
<dbReference type="Gramene" id="AT1G67700.1">
    <molecule id="Q8LDL0-2"/>
    <property type="protein sequence ID" value="AT1G67700.1"/>
    <property type="gene ID" value="AT1G67700"/>
</dbReference>
<dbReference type="Gramene" id="AT1G67700.2">
    <molecule id="Q8LDL0-1"/>
    <property type="protein sequence ID" value="AT1G67700.2"/>
    <property type="gene ID" value="AT1G67700"/>
</dbReference>
<dbReference type="Gramene" id="AT1G67700.3">
    <molecule id="Q8LDL0-3"/>
    <property type="protein sequence ID" value="AT1G67700.3"/>
    <property type="gene ID" value="AT1G67700"/>
</dbReference>
<dbReference type="Gramene" id="AT1G67700.4">
    <molecule id="Q8LDL0-2"/>
    <property type="protein sequence ID" value="AT1G67700.4"/>
    <property type="gene ID" value="AT1G67700"/>
</dbReference>
<dbReference type="Gramene" id="AT1G67700.5">
    <molecule id="Q8LDL0-1"/>
    <property type="protein sequence ID" value="AT1G67700.5"/>
    <property type="gene ID" value="AT1G67700"/>
</dbReference>
<dbReference type="KEGG" id="ath:AT1G67700"/>
<dbReference type="Araport" id="AT1G67700"/>
<dbReference type="TAIR" id="AT1G67700">
    <property type="gene designation" value="HHL1"/>
</dbReference>
<dbReference type="eggNOG" id="KOG2089">
    <property type="taxonomic scope" value="Eukaryota"/>
</dbReference>
<dbReference type="InParanoid" id="Q8LDL0"/>
<dbReference type="OMA" id="VFMRMAN"/>
<dbReference type="OrthoDB" id="566705at2759"/>
<dbReference type="PhylomeDB" id="Q8LDL0"/>
<dbReference type="PRO" id="PR:Q8LDL0"/>
<dbReference type="Proteomes" id="UP000006548">
    <property type="component" value="Chromosome 1"/>
</dbReference>
<dbReference type="ExpressionAtlas" id="Q8LDL0">
    <property type="expression patterns" value="baseline and differential"/>
</dbReference>
<dbReference type="GO" id="GO:0009507">
    <property type="term" value="C:chloroplast"/>
    <property type="evidence" value="ECO:0007005"/>
    <property type="project" value="TAIR"/>
</dbReference>
<dbReference type="GO" id="GO:0009941">
    <property type="term" value="C:chloroplast envelope"/>
    <property type="evidence" value="ECO:0007005"/>
    <property type="project" value="TAIR"/>
</dbReference>
<dbReference type="GO" id="GO:0009534">
    <property type="term" value="C:chloroplast thylakoid"/>
    <property type="evidence" value="ECO:0007005"/>
    <property type="project" value="TAIR"/>
</dbReference>
<dbReference type="GO" id="GO:0009535">
    <property type="term" value="C:chloroplast thylakoid membrane"/>
    <property type="evidence" value="ECO:0007669"/>
    <property type="project" value="UniProtKB-SubCell"/>
</dbReference>
<dbReference type="GO" id="GO:0005739">
    <property type="term" value="C:mitochondrion"/>
    <property type="evidence" value="ECO:0007005"/>
    <property type="project" value="TAIR"/>
</dbReference>
<dbReference type="GO" id="GO:0003729">
    <property type="term" value="F:mRNA binding"/>
    <property type="evidence" value="ECO:0000314"/>
    <property type="project" value="TAIR"/>
</dbReference>
<dbReference type="InterPro" id="IPR045388">
    <property type="entry name" value="HHL1-like"/>
</dbReference>
<dbReference type="PANTHER" id="PTHR48191">
    <property type="entry name" value="PROTEIN HHL1 CHLOROPLASTIC"/>
    <property type="match status" value="1"/>
</dbReference>
<dbReference type="PANTHER" id="PTHR48191:SF2">
    <property type="entry name" value="PROTEIN HHL1, CHLOROPLASTIC"/>
    <property type="match status" value="1"/>
</dbReference>
<dbReference type="Pfam" id="PF20133">
    <property type="entry name" value="HHL1-like"/>
    <property type="match status" value="1"/>
</dbReference>
<comment type="function">
    <text evidence="3">Involved in photoprotection. Forms a complex with LQY1 that is involved in the repair and reassembly cycle of the PSII-LHCII supercomplex under high-light conditions. May function in guiding the release of psbC from PSII core monomers.</text>
</comment>
<comment type="subunit">
    <text evidence="3">Interacts with psbB, psbC and LQY1, but not with psbA or psbD (PubMed:24632535).</text>
</comment>
<comment type="subcellular location">
    <subcellularLocation>
        <location evidence="3">Plastid</location>
        <location evidence="3">Chloroplast thylakoid membrane</location>
        <topology evidence="5">Single-pass membrane protein</topology>
    </subcellularLocation>
    <text evidence="3">Found in the stroma lamellae &gt; grana margin &gt; grana core.</text>
</comment>
<comment type="alternative products">
    <event type="alternative splicing"/>
    <isoform>
        <id>Q8LDL0-1</id>
        <name>1</name>
        <sequence type="displayed"/>
    </isoform>
    <isoform>
        <id>Q8LDL0-2</id>
        <name>2</name>
        <sequence type="described" ref="VSP_057473"/>
    </isoform>
    <isoform>
        <id>Q8LDL0-3</id>
        <name>3</name>
        <sequence type="described" ref="VSP_057472 VSP_057473"/>
    </isoform>
</comment>
<comment type="induction">
    <text evidence="3">Not regulated at the transcription level by high light.</text>
</comment>
<comment type="disruption phenotype">
    <text evidence="3">No visible phenotype, when grown under normal light conditions. Partial loss of PSII capacity after high-light stress.</text>
</comment>
<sequence length="231" mass="26081">MEVSMSLNALTRLPLKNTGRFEEVGLARHSLFSSRTACRETAVQQRRMVFVVEAKGKKGMAARQYQRTPPPMPKIEDDGNPRFVIFIRMANVYLWYPLSIIAGGTTAKIMVAAKDNLLGKYIYKDTIARNIAAVIYRDEKEIQKTAIKQHRVLRTATEFRYGYKLVENGNMRAALSTSDVIELPTQDQLKTVFDKVKDYFGDAKESFGKLSSLNPGSDEKTEETSDEKAKA</sequence>
<accession>Q8LDL0</accession>
<accession>F4HTQ4</accession>
<accession>Q94A67</accession>
<evidence type="ECO:0000255" key="1"/>
<evidence type="ECO:0000256" key="2">
    <source>
        <dbReference type="SAM" id="MobiDB-lite"/>
    </source>
</evidence>
<evidence type="ECO:0000269" key="3">
    <source>
    </source>
</evidence>
<evidence type="ECO:0000303" key="4">
    <source>
    </source>
</evidence>
<evidence type="ECO:0000305" key="5"/>
<evidence type="ECO:0000312" key="6">
    <source>
        <dbReference type="Araport" id="AT1G67700"/>
    </source>
</evidence>
<evidence type="ECO:0000312" key="7">
    <source>
        <dbReference type="EMBL" id="AAM63154.1"/>
    </source>
</evidence>
<evidence type="ECO:0000312" key="8">
    <source>
        <dbReference type="EMBL" id="AC008113"/>
    </source>
</evidence>
<protein>
    <recommendedName>
        <fullName evidence="5">Protein HHL1, chloroplastic</fullName>
    </recommendedName>
    <alternativeName>
        <fullName evidence="4">Hypersensitive to high light 1</fullName>
    </alternativeName>
</protein>
<name>HHL1_ARATH</name>
<feature type="transit peptide" description="Chloroplast" evidence="5">
    <location>
        <begin position="1"/>
        <end position="39"/>
    </location>
</feature>
<feature type="chain" id="PRO_0000431978" description="Protein HHL1, chloroplastic">
    <location>
        <begin position="40"/>
        <end position="231"/>
    </location>
</feature>
<feature type="transmembrane region" description="Helical" evidence="1">
    <location>
        <begin position="93"/>
        <end position="113"/>
    </location>
</feature>
<feature type="region of interest" description="Disordered" evidence="2">
    <location>
        <begin position="206"/>
        <end position="231"/>
    </location>
</feature>
<feature type="compositionally biased region" description="Basic and acidic residues" evidence="2">
    <location>
        <begin position="217"/>
        <end position="231"/>
    </location>
</feature>
<feature type="splice variant" id="VSP_057472" description="In isoform 3.">
    <location>
        <position position="166"/>
    </location>
</feature>
<feature type="splice variant" id="VSP_057473" description="In isoform 2 and isoform 3.">
    <location>
        <position position="231"/>
    </location>
</feature>
<keyword id="KW-0025">Alternative splicing</keyword>
<keyword id="KW-0150">Chloroplast</keyword>
<keyword id="KW-0472">Membrane</keyword>
<keyword id="KW-0934">Plastid</keyword>
<keyword id="KW-1185">Reference proteome</keyword>
<keyword id="KW-0793">Thylakoid</keyword>
<keyword id="KW-0809">Transit peptide</keyword>
<keyword id="KW-0812">Transmembrane</keyword>
<keyword id="KW-1133">Transmembrane helix</keyword>
<organism evidence="7">
    <name type="scientific">Arabidopsis thaliana</name>
    <name type="common">Mouse-ear cress</name>
    <dbReference type="NCBI Taxonomy" id="3702"/>
    <lineage>
        <taxon>Eukaryota</taxon>
        <taxon>Viridiplantae</taxon>
        <taxon>Streptophyta</taxon>
        <taxon>Embryophyta</taxon>
        <taxon>Tracheophyta</taxon>
        <taxon>Spermatophyta</taxon>
        <taxon>Magnoliopsida</taxon>
        <taxon>eudicotyledons</taxon>
        <taxon>Gunneridae</taxon>
        <taxon>Pentapetalae</taxon>
        <taxon>rosids</taxon>
        <taxon>malvids</taxon>
        <taxon>Brassicales</taxon>
        <taxon>Brassicaceae</taxon>
        <taxon>Camelineae</taxon>
        <taxon>Arabidopsis</taxon>
    </lineage>
</organism>
<proteinExistence type="evidence at protein level"/>